<feature type="chain" id="PRO_0000418972" description="L-2,3-butanediol dehydrogenase">
    <location>
        <begin position="1"/>
        <end position="258"/>
    </location>
</feature>
<feature type="active site" description="Proton acceptor" evidence="1 3">
    <location>
        <position position="154"/>
    </location>
</feature>
<feature type="binding site" evidence="5">
    <location>
        <begin position="12"/>
        <end position="14"/>
    </location>
    <ligand>
        <name>NAD(+)</name>
        <dbReference type="ChEBI" id="CHEBI:57540"/>
    </ligand>
</feature>
<feature type="binding site" evidence="5">
    <location>
        <position position="33"/>
    </location>
    <ligand>
        <name>NAD(+)</name>
        <dbReference type="ChEBI" id="CHEBI:57540"/>
    </ligand>
</feature>
<feature type="binding site" evidence="5">
    <location>
        <position position="37"/>
    </location>
    <ligand>
        <name>NAD(+)</name>
        <dbReference type="ChEBI" id="CHEBI:57540"/>
    </ligand>
</feature>
<feature type="binding site" evidence="5">
    <location>
        <begin position="61"/>
        <end position="62"/>
    </location>
    <ligand>
        <name>NAD(+)</name>
        <dbReference type="ChEBI" id="CHEBI:57540"/>
    </ligand>
</feature>
<feature type="binding site" evidence="5">
    <location>
        <position position="88"/>
    </location>
    <ligand>
        <name>NAD(+)</name>
        <dbReference type="ChEBI" id="CHEBI:57540"/>
    </ligand>
</feature>
<feature type="binding site" evidence="5">
    <location>
        <position position="154"/>
    </location>
    <ligand>
        <name>NAD(+)</name>
        <dbReference type="ChEBI" id="CHEBI:57540"/>
    </ligand>
</feature>
<feature type="binding site" evidence="5">
    <location>
        <position position="158"/>
    </location>
    <ligand>
        <name>NAD(+)</name>
        <dbReference type="ChEBI" id="CHEBI:57540"/>
    </ligand>
</feature>
<feature type="binding site" evidence="5">
    <location>
        <begin position="184"/>
        <end position="189"/>
    </location>
    <ligand>
        <name>NAD(+)</name>
        <dbReference type="ChEBI" id="CHEBI:57540"/>
    </ligand>
</feature>
<feature type="mutagenesis site" description="Loss of L-BD oxidizing activity, and does not gain the ability to use meso-BD as substrate; when associated with N-148." evidence="5">
    <original>I</original>
    <variation>Q</variation>
    <location>
        <position position="142"/>
    </location>
</feature>
<feature type="mutagenesis site" description="Loss of L-BD oxidizing activity. Does not gain the ability to use meso-BD as substrate." evidence="5">
    <original>I</original>
    <variation>Q</variation>
    <location>
        <position position="142"/>
    </location>
</feature>
<feature type="mutagenesis site" description="Loss of L-BD oxidizing activity, and does not gain the ability to use meso-BD as substrate; when associated with Q-142." evidence="5">
    <original>F</original>
    <variation>N</variation>
    <location>
        <position position="148"/>
    </location>
</feature>
<feature type="mutagenesis site" description="Loss of L-BD oxidizing activity. Does not gain the ability to use meso-BD as substrate." evidence="5">
    <original>F</original>
    <variation>N</variation>
    <location>
        <position position="148"/>
    </location>
</feature>
<feature type="strand" evidence="11">
    <location>
        <begin position="4"/>
        <end position="8"/>
    </location>
</feature>
<feature type="turn" evidence="11">
    <location>
        <begin position="9"/>
        <end position="11"/>
    </location>
</feature>
<feature type="helix" evidence="11">
    <location>
        <begin position="13"/>
        <end position="25"/>
    </location>
</feature>
<feature type="strand" evidence="11">
    <location>
        <begin position="28"/>
        <end position="33"/>
    </location>
</feature>
<feature type="helix" evidence="11">
    <location>
        <begin position="35"/>
        <end position="37"/>
    </location>
</feature>
<feature type="helix" evidence="11">
    <location>
        <begin position="38"/>
        <end position="49"/>
    </location>
</feature>
<feature type="turn" evidence="11">
    <location>
        <begin position="50"/>
        <end position="52"/>
    </location>
</feature>
<feature type="strand" evidence="11">
    <location>
        <begin position="55"/>
        <end position="59"/>
    </location>
</feature>
<feature type="helix" evidence="11">
    <location>
        <begin position="65"/>
        <end position="79"/>
    </location>
</feature>
<feature type="strand" evidence="11">
    <location>
        <begin position="84"/>
        <end position="87"/>
    </location>
</feature>
<feature type="helix" evidence="12">
    <location>
        <begin position="97"/>
        <end position="99"/>
    </location>
</feature>
<feature type="helix" evidence="12">
    <location>
        <begin position="102"/>
        <end position="112"/>
    </location>
</feature>
<feature type="helix" evidence="12">
    <location>
        <begin position="114"/>
        <end position="123"/>
    </location>
</feature>
<feature type="strand" evidence="11">
    <location>
        <begin position="135"/>
        <end position="139"/>
    </location>
</feature>
<feature type="helix" evidence="12">
    <location>
        <begin position="142"/>
        <end position="144"/>
    </location>
</feature>
<feature type="helix" evidence="12">
    <location>
        <begin position="152"/>
        <end position="166"/>
    </location>
</feature>
<feature type="helix" evidence="11">
    <location>
        <begin position="173"/>
        <end position="175"/>
    </location>
</feature>
<feature type="strand" evidence="11">
    <location>
        <begin position="178"/>
        <end position="184"/>
    </location>
</feature>
<feature type="helix" evidence="12">
    <location>
        <begin position="190"/>
        <end position="203"/>
    </location>
</feature>
<feature type="helix" evidence="12">
    <location>
        <begin position="209"/>
        <end position="214"/>
    </location>
</feature>
<feature type="turn" evidence="12">
    <location>
        <begin position="215"/>
        <end position="217"/>
    </location>
</feature>
<feature type="helix" evidence="12">
    <location>
        <begin position="226"/>
        <end position="237"/>
    </location>
</feature>
<feature type="helix" evidence="11">
    <location>
        <begin position="239"/>
        <end position="241"/>
    </location>
</feature>
<feature type="strand" evidence="11">
    <location>
        <begin position="248"/>
        <end position="255"/>
    </location>
</feature>
<proteinExistence type="evidence at protein level"/>
<evidence type="ECO:0000250" key="1">
    <source>
        <dbReference type="UniProtKB" id="Q48436"/>
    </source>
</evidence>
<evidence type="ECO:0000255" key="2"/>
<evidence type="ECO:0000255" key="3">
    <source>
        <dbReference type="PROSITE-ProRule" id="PRU10001"/>
    </source>
</evidence>
<evidence type="ECO:0000269" key="4">
    <source>
    </source>
</evidence>
<evidence type="ECO:0000269" key="5">
    <source>
    </source>
</evidence>
<evidence type="ECO:0000269" key="6">
    <source ref="1"/>
</evidence>
<evidence type="ECO:0000303" key="7">
    <source ref="1"/>
</evidence>
<evidence type="ECO:0000305" key="8"/>
<evidence type="ECO:0000312" key="9">
    <source>
        <dbReference type="EMBL" id="BAA36159.1"/>
    </source>
</evidence>
<evidence type="ECO:0000312" key="10">
    <source>
        <dbReference type="PDB" id="3A28"/>
    </source>
</evidence>
<evidence type="ECO:0007829" key="11">
    <source>
        <dbReference type="PDB" id="3A28"/>
    </source>
</evidence>
<evidence type="ECO:0007829" key="12">
    <source>
        <dbReference type="PDB" id="3WYE"/>
    </source>
</evidence>
<name>BUDC_CORGT</name>
<protein>
    <recommendedName>
        <fullName>L-2,3-butanediol dehydrogenase</fullName>
        <shortName>L-BDH</shortName>
        <ecNumber>1.1.1.76</ecNumber>
    </recommendedName>
    <alternativeName>
        <fullName>(S,S)-butanediol dehydrogenase</fullName>
    </alternativeName>
    <alternativeName>
        <fullName evidence="7">Diacetyl reductase [(S)-acetoin forming]</fullName>
        <ecNumber evidence="6">1.1.1.304</ecNumber>
    </alternativeName>
</protein>
<keyword id="KW-0002">3D-structure</keyword>
<keyword id="KW-0903">Direct protein sequencing</keyword>
<keyword id="KW-0520">NAD</keyword>
<keyword id="KW-0560">Oxidoreductase</keyword>
<reference evidence="8 9" key="1">
    <citation type="journal article" date="1998" name="J. Ferment. Bioeng.">
        <title>Cloning, expression and nucleotide sequence of the L-2,3-butanediol dehydrogenase gene from Brevibacterium saccharolyticum C-1012.</title>
        <authorList>
            <person name="Ui S."/>
            <person name="Otagiri M."/>
            <person name="Mimura A."/>
            <person name="Dohmae N."/>
            <person name="Takio K."/>
            <person name="Ohkuma M."/>
            <person name="Kudo T."/>
        </authorList>
    </citation>
    <scope>NUCLEOTIDE SEQUENCE [GENOMIC DNA]</scope>
    <scope>PROTEIN SEQUENCE OF 1-19</scope>
    <scope>FUNCTION</scope>
    <scope>GENE NAME</scope>
    <source>
        <strain evidence="6">C-1012</strain>
    </source>
</reference>
<reference key="2">
    <citation type="journal article" date="2001" name="Biosci. Biotechnol. Biochem.">
        <title>Purification and characterization of L-2,3-butanediol dehydrogenase of Brevibacterium saccharolyticum C-1012 expressed in Escherichia coli.</title>
        <authorList>
            <person name="Takusagawa Y."/>
            <person name="Otagiri M."/>
            <person name="Ui S."/>
            <person name="Ohtsuki T."/>
            <person name="Mimura A."/>
            <person name="Ohkuma M."/>
            <person name="Kudo T."/>
        </authorList>
    </citation>
    <scope>FUNCTION</scope>
    <scope>CATALYTIC ACTIVITY</scope>
    <scope>SUBSTRATE SPECIFICITY</scope>
    <scope>STEREOSPECIFICITY</scope>
    <scope>BIOPHYSICOCHEMICAL PROPERTIES</scope>
    <scope>ACTIVITY REGULATION</scope>
    <scope>SUBUNIT</scope>
    <source>
        <strain>C-1012</strain>
    </source>
</reference>
<reference evidence="8 10" key="3">
    <citation type="journal article" date="2010" name="FEBS Lett.">
        <title>Structural basis for chiral substrate recognition by two 2,3-butanediol dehydrogenases.</title>
        <authorList>
            <person name="Otagiri M."/>
            <person name="Ui S."/>
            <person name="Takusagawa Y."/>
            <person name="Ohtsuki T."/>
            <person name="Kurisu G."/>
            <person name="Kusunoki M."/>
        </authorList>
    </citation>
    <scope>X-RAY CRYSTALLOGRAPHY (2.00 ANGSTROMS) IN COMPLEX WITH NAD</scope>
    <scope>STEREOSELECTIVITY</scope>
    <scope>MUTAGENESIS OF ILE-142 AND PHE-148</scope>
</reference>
<dbReference type="EC" id="1.1.1.76"/>
<dbReference type="EC" id="1.1.1.304" evidence="6"/>
<dbReference type="EMBL" id="AB009078">
    <property type="protein sequence ID" value="BAA36159.1"/>
    <property type="molecule type" value="Genomic_DNA"/>
</dbReference>
<dbReference type="RefSeq" id="WP_077313273.1">
    <property type="nucleotide sequence ID" value="NZ_BAYH01000035.1"/>
</dbReference>
<dbReference type="PDB" id="3A28">
    <property type="method" value="X-ray"/>
    <property type="resolution" value="2.00 A"/>
    <property type="chains" value="A/B/C/D/E/F/G/H=1-258"/>
</dbReference>
<dbReference type="PDB" id="3WYE">
    <property type="method" value="X-ray"/>
    <property type="resolution" value="1.58 A"/>
    <property type="chains" value="A/B=86-120, A/B=137-163, A/B=184-238"/>
</dbReference>
<dbReference type="PDBsum" id="3A28"/>
<dbReference type="PDBsum" id="3WYE"/>
<dbReference type="SMR" id="Q9ZNN8"/>
<dbReference type="KEGG" id="ag:BAA36159"/>
<dbReference type="BRENDA" id="1.1.1.76">
    <property type="organism ID" value="960"/>
</dbReference>
<dbReference type="EvolutionaryTrace" id="Q9ZNN8"/>
<dbReference type="GO" id="GO:0047512">
    <property type="term" value="F:(S,S)-butanediol dehydrogenase activity"/>
    <property type="evidence" value="ECO:0000314"/>
    <property type="project" value="UniProtKB"/>
</dbReference>
<dbReference type="GO" id="GO:0052588">
    <property type="term" value="F:diacetyl reductase ((S)-acetoin forming) (NAD+) activity"/>
    <property type="evidence" value="ECO:0007669"/>
    <property type="project" value="UniProtKB-EC"/>
</dbReference>
<dbReference type="GO" id="GO:0070403">
    <property type="term" value="F:NAD+ binding"/>
    <property type="evidence" value="ECO:0000314"/>
    <property type="project" value="UniProtKB"/>
</dbReference>
<dbReference type="GO" id="GO:0070404">
    <property type="term" value="F:NADH binding"/>
    <property type="evidence" value="ECO:0000314"/>
    <property type="project" value="UniProtKB"/>
</dbReference>
<dbReference type="GO" id="GO:0048038">
    <property type="term" value="F:quinone binding"/>
    <property type="evidence" value="ECO:0007669"/>
    <property type="project" value="TreeGrafter"/>
</dbReference>
<dbReference type="GO" id="GO:0045150">
    <property type="term" value="P:acetoin catabolic process"/>
    <property type="evidence" value="ECO:0007669"/>
    <property type="project" value="InterPro"/>
</dbReference>
<dbReference type="GO" id="GO:0045149">
    <property type="term" value="P:acetoin metabolic process"/>
    <property type="evidence" value="ECO:0000314"/>
    <property type="project" value="UniProtKB"/>
</dbReference>
<dbReference type="GO" id="GO:0034077">
    <property type="term" value="P:butanediol metabolic process"/>
    <property type="evidence" value="ECO:0000314"/>
    <property type="project" value="UniProtKB"/>
</dbReference>
<dbReference type="GO" id="GO:0006633">
    <property type="term" value="P:fatty acid biosynthetic process"/>
    <property type="evidence" value="ECO:0007669"/>
    <property type="project" value="TreeGrafter"/>
</dbReference>
<dbReference type="GO" id="GO:0051289">
    <property type="term" value="P:protein homotetramerization"/>
    <property type="evidence" value="ECO:0000314"/>
    <property type="project" value="UniProtKB"/>
</dbReference>
<dbReference type="CDD" id="cd05366">
    <property type="entry name" value="meso-BDH-like_SDR_c"/>
    <property type="match status" value="1"/>
</dbReference>
<dbReference type="FunFam" id="3.40.50.720:FF:001329">
    <property type="entry name" value="L-2,3-butanediol dehydrogenase"/>
    <property type="match status" value="1"/>
</dbReference>
<dbReference type="Gene3D" id="3.40.50.720">
    <property type="entry name" value="NAD(P)-binding Rossmann-like Domain"/>
    <property type="match status" value="1"/>
</dbReference>
<dbReference type="InterPro" id="IPR014007">
    <property type="entry name" value="23BDH"/>
</dbReference>
<dbReference type="InterPro" id="IPR036291">
    <property type="entry name" value="NAD(P)-bd_dom_sf"/>
</dbReference>
<dbReference type="InterPro" id="IPR020904">
    <property type="entry name" value="Sc_DH/Rdtase_CS"/>
</dbReference>
<dbReference type="InterPro" id="IPR002347">
    <property type="entry name" value="SDR_fam"/>
</dbReference>
<dbReference type="NCBIfam" id="TIGR02415">
    <property type="entry name" value="23BDH"/>
    <property type="match status" value="1"/>
</dbReference>
<dbReference type="NCBIfam" id="NF005559">
    <property type="entry name" value="PRK07231.1"/>
    <property type="match status" value="1"/>
</dbReference>
<dbReference type="PANTHER" id="PTHR42760:SF121">
    <property type="entry name" value="3-OXOACYL-(ACYL-CARRIER-PROTEIN) REDUCTASE"/>
    <property type="match status" value="1"/>
</dbReference>
<dbReference type="PANTHER" id="PTHR42760">
    <property type="entry name" value="SHORT-CHAIN DEHYDROGENASES/REDUCTASES FAMILY MEMBER"/>
    <property type="match status" value="1"/>
</dbReference>
<dbReference type="Pfam" id="PF13561">
    <property type="entry name" value="adh_short_C2"/>
    <property type="match status" value="1"/>
</dbReference>
<dbReference type="PRINTS" id="PR00081">
    <property type="entry name" value="GDHRDH"/>
</dbReference>
<dbReference type="PRINTS" id="PR00080">
    <property type="entry name" value="SDRFAMILY"/>
</dbReference>
<dbReference type="SUPFAM" id="SSF51735">
    <property type="entry name" value="NAD(P)-binding Rossmann-fold domains"/>
    <property type="match status" value="1"/>
</dbReference>
<dbReference type="PROSITE" id="PS00061">
    <property type="entry name" value="ADH_SHORT"/>
    <property type="match status" value="1"/>
</dbReference>
<comment type="function">
    <text evidence="4 6">Catalyzes the reversible reduction of (S)-acetoin to (S,S)-butane-2,3-diol (L-BD) in the presence of NADH. To a lesser extent, can also catalyze the irreversible reduction of diacetyl to (S)-acetoin. Cannot oxidize meso-BD, D-BD, 2-butanol, 1,2-propanediol, ethanol, acetol, 1,2-butanediol, 1,3-butanediol, n-butanol, and n-propanol. Cannot reduce (R)-acetoin, acetol, dihydroxyacetone and 2,4-pentanedione.</text>
</comment>
<comment type="catalytic activity">
    <reaction evidence="4">
        <text>(S,S)-butane-2,3-diol + NAD(+) = (S)-acetoin + NADH + H(+)</text>
        <dbReference type="Rhea" id="RHEA:12184"/>
        <dbReference type="ChEBI" id="CHEBI:15378"/>
        <dbReference type="ChEBI" id="CHEBI:15687"/>
        <dbReference type="ChEBI" id="CHEBI:16812"/>
        <dbReference type="ChEBI" id="CHEBI:57540"/>
        <dbReference type="ChEBI" id="CHEBI:57945"/>
        <dbReference type="EC" id="1.1.1.76"/>
    </reaction>
</comment>
<comment type="catalytic activity">
    <reaction evidence="4 6">
        <text>(S)-acetoin + NAD(+) = diacetyl + NADH + H(+)</text>
        <dbReference type="Rhea" id="RHEA:27286"/>
        <dbReference type="ChEBI" id="CHEBI:15378"/>
        <dbReference type="ChEBI" id="CHEBI:15687"/>
        <dbReference type="ChEBI" id="CHEBI:16583"/>
        <dbReference type="ChEBI" id="CHEBI:57540"/>
        <dbReference type="ChEBI" id="CHEBI:57945"/>
        <dbReference type="EC" id="1.1.1.304"/>
    </reaction>
</comment>
<comment type="activity regulation">
    <text evidence="4">Slightly activated by Ba(2+), Ca(2+), Mn(2+), Mg(2+), and Co(2+), while Hg(2+) and Cu(2+) cause marked inhibition of the activity. Ni(2+), Zn(2+) and Cd(2+) have no effect on the catalytic activity. Is also slightly inhibited by lactate, pyruvate, succinate, acetate and formate.</text>
</comment>
<comment type="biophysicochemical properties">
    <kinetics>
        <KM evidence="4">0.1 mM for NADH (at pH 6.0)</KM>
        <KM evidence="4">0.44 mM for (S)-acetoin (at pH 6.0)</KM>
        <KM evidence="4">0.07 mM for NAD(+) (at pH 10.5)</KM>
        <KM evidence="4">0.22 mM for (S,S)-butane-2,3-diol (at pH 10.5)</KM>
    </kinetics>
    <phDependence>
        <text evidence="4">Optimum pH is 10.5 for the oxidative reaction with L-BD and 6.0 for the reductive reaction with (S)-acetoin. Stable from pH 7.0 to 9.0.</text>
    </phDependence>
    <temperatureDependence>
        <text evidence="4">Stable up to 37 degrees Celsius but is rapidly inactivated over 40 degrees Celsius.</text>
    </temperatureDependence>
</comment>
<comment type="subunit">
    <text evidence="4 5">Homotetramer.</text>
</comment>
<comment type="similarity">
    <text evidence="2">Belongs to the short-chain dehydrogenases/reductases (SDR) family.</text>
</comment>
<organism>
    <name type="scientific">Corynebacterium glutamicum</name>
    <name type="common">Brevibacterium saccharolyticum</name>
    <dbReference type="NCBI Taxonomy" id="1718"/>
    <lineage>
        <taxon>Bacteria</taxon>
        <taxon>Bacillati</taxon>
        <taxon>Actinomycetota</taxon>
        <taxon>Actinomycetes</taxon>
        <taxon>Mycobacteriales</taxon>
        <taxon>Corynebacteriaceae</taxon>
        <taxon>Corynebacterium</taxon>
    </lineage>
</organism>
<gene>
    <name evidence="7" type="primary">budC</name>
</gene>
<accession>Q9ZNN8</accession>
<sequence length="258" mass="27108">MSKVAMVTGGAQGIGRGISEKLAADGFDIAVADLPQQEEQAAETIKLIEAADQKAVFVGLDVTDKANFDSAIDEAAEKLGGFDVLVNNAGIAQIKPLLEVTEEDLKQIYSVNVFSVFFGIQAASRKFDELGVKGKIINAASIAAIQGFPILSAYSTTKFAVRGLTQAAAQELAPKGHTVNAYAPGIVGTGMWEQIDAELSKINGKPIGENFKEYSSSIALGRPSVPEDVAGLVSFLASENSNYVTGQVMLVDGGMLYN</sequence>